<gene>
    <name evidence="1" type="primary">pcp</name>
    <name type="ordered locus">SaurJH9_2714</name>
</gene>
<proteinExistence type="inferred from homology"/>
<evidence type="ECO:0000255" key="1">
    <source>
        <dbReference type="HAMAP-Rule" id="MF_00417"/>
    </source>
</evidence>
<reference key="1">
    <citation type="submission" date="2007-05" db="EMBL/GenBank/DDBJ databases">
        <title>Complete sequence of chromosome of Staphylococcus aureus subsp. aureus JH9.</title>
        <authorList>
            <consortium name="US DOE Joint Genome Institute"/>
            <person name="Copeland A."/>
            <person name="Lucas S."/>
            <person name="Lapidus A."/>
            <person name="Barry K."/>
            <person name="Detter J.C."/>
            <person name="Glavina del Rio T."/>
            <person name="Hammon N."/>
            <person name="Israni S."/>
            <person name="Pitluck S."/>
            <person name="Chain P."/>
            <person name="Malfatti S."/>
            <person name="Shin M."/>
            <person name="Vergez L."/>
            <person name="Schmutz J."/>
            <person name="Larimer F."/>
            <person name="Land M."/>
            <person name="Hauser L."/>
            <person name="Kyrpides N."/>
            <person name="Kim E."/>
            <person name="Tomasz A."/>
            <person name="Richardson P."/>
        </authorList>
    </citation>
    <scope>NUCLEOTIDE SEQUENCE [LARGE SCALE GENOMIC DNA]</scope>
    <source>
        <strain>JH9</strain>
    </source>
</reference>
<name>PCP_STAA9</name>
<dbReference type="EC" id="3.4.19.3" evidence="1"/>
<dbReference type="EMBL" id="CP000703">
    <property type="protein sequence ID" value="ABQ50490.1"/>
    <property type="molecule type" value="Genomic_DNA"/>
</dbReference>
<dbReference type="RefSeq" id="WP_000547838.1">
    <property type="nucleotide sequence ID" value="NC_009487.1"/>
</dbReference>
<dbReference type="SMR" id="A5IWB7"/>
<dbReference type="MEROPS" id="C15.001"/>
<dbReference type="KEGG" id="saj:SaurJH9_2714"/>
<dbReference type="HOGENOM" id="CLU_043960_4_0_9"/>
<dbReference type="GO" id="GO:0005829">
    <property type="term" value="C:cytosol"/>
    <property type="evidence" value="ECO:0007669"/>
    <property type="project" value="InterPro"/>
</dbReference>
<dbReference type="GO" id="GO:0016920">
    <property type="term" value="F:pyroglutamyl-peptidase activity"/>
    <property type="evidence" value="ECO:0007669"/>
    <property type="project" value="UniProtKB-UniRule"/>
</dbReference>
<dbReference type="GO" id="GO:0006508">
    <property type="term" value="P:proteolysis"/>
    <property type="evidence" value="ECO:0007669"/>
    <property type="project" value="UniProtKB-KW"/>
</dbReference>
<dbReference type="CDD" id="cd00501">
    <property type="entry name" value="Peptidase_C15"/>
    <property type="match status" value="1"/>
</dbReference>
<dbReference type="FunFam" id="3.40.630.20:FF:000001">
    <property type="entry name" value="Pyrrolidone-carboxylate peptidase"/>
    <property type="match status" value="1"/>
</dbReference>
<dbReference type="Gene3D" id="3.40.630.20">
    <property type="entry name" value="Peptidase C15, pyroglutamyl peptidase I-like"/>
    <property type="match status" value="1"/>
</dbReference>
<dbReference type="HAMAP" id="MF_00417">
    <property type="entry name" value="Pyrrolid_peptidase"/>
    <property type="match status" value="1"/>
</dbReference>
<dbReference type="InterPro" id="IPR000816">
    <property type="entry name" value="Peptidase_C15"/>
</dbReference>
<dbReference type="InterPro" id="IPR016125">
    <property type="entry name" value="Peptidase_C15-like"/>
</dbReference>
<dbReference type="InterPro" id="IPR036440">
    <property type="entry name" value="Peptidase_C15-like_sf"/>
</dbReference>
<dbReference type="InterPro" id="IPR029762">
    <property type="entry name" value="PGP-I_bact-type"/>
</dbReference>
<dbReference type="InterPro" id="IPR033694">
    <property type="entry name" value="PGPEP1_Cys_AS"/>
</dbReference>
<dbReference type="InterPro" id="IPR033693">
    <property type="entry name" value="PGPEP1_Glu_AS"/>
</dbReference>
<dbReference type="NCBIfam" id="NF009676">
    <property type="entry name" value="PRK13197.1"/>
    <property type="match status" value="1"/>
</dbReference>
<dbReference type="NCBIfam" id="TIGR00504">
    <property type="entry name" value="pyro_pdase"/>
    <property type="match status" value="1"/>
</dbReference>
<dbReference type="PANTHER" id="PTHR23402">
    <property type="entry name" value="PROTEASE FAMILY C15 PYROGLUTAMYL-PEPTIDASE I-RELATED"/>
    <property type="match status" value="1"/>
</dbReference>
<dbReference type="PANTHER" id="PTHR23402:SF1">
    <property type="entry name" value="PYROGLUTAMYL-PEPTIDASE I"/>
    <property type="match status" value="1"/>
</dbReference>
<dbReference type="Pfam" id="PF01470">
    <property type="entry name" value="Peptidase_C15"/>
    <property type="match status" value="1"/>
</dbReference>
<dbReference type="PIRSF" id="PIRSF015592">
    <property type="entry name" value="Prld-crbxl_pptds"/>
    <property type="match status" value="1"/>
</dbReference>
<dbReference type="PRINTS" id="PR00706">
    <property type="entry name" value="PYROGLUPTASE"/>
</dbReference>
<dbReference type="SUPFAM" id="SSF53182">
    <property type="entry name" value="Pyrrolidone carboxyl peptidase (pyroglutamate aminopeptidase)"/>
    <property type="match status" value="1"/>
</dbReference>
<dbReference type="PROSITE" id="PS01334">
    <property type="entry name" value="PYRASE_CYS"/>
    <property type="match status" value="1"/>
</dbReference>
<dbReference type="PROSITE" id="PS01333">
    <property type="entry name" value="PYRASE_GLU"/>
    <property type="match status" value="1"/>
</dbReference>
<feature type="chain" id="PRO_1000080516" description="Pyrrolidone-carboxylate peptidase">
    <location>
        <begin position="1"/>
        <end position="212"/>
    </location>
</feature>
<feature type="active site" evidence="1">
    <location>
        <position position="78"/>
    </location>
</feature>
<feature type="active site" evidence="1">
    <location>
        <position position="141"/>
    </location>
</feature>
<feature type="active site" evidence="1">
    <location>
        <position position="165"/>
    </location>
</feature>
<accession>A5IWB7</accession>
<keyword id="KW-0963">Cytoplasm</keyword>
<keyword id="KW-0378">Hydrolase</keyword>
<keyword id="KW-0645">Protease</keyword>
<keyword id="KW-0788">Thiol protease</keyword>
<organism>
    <name type="scientific">Staphylococcus aureus (strain JH9)</name>
    <dbReference type="NCBI Taxonomy" id="359786"/>
    <lineage>
        <taxon>Bacteria</taxon>
        <taxon>Bacillati</taxon>
        <taxon>Bacillota</taxon>
        <taxon>Bacilli</taxon>
        <taxon>Bacillales</taxon>
        <taxon>Staphylococcaceae</taxon>
        <taxon>Staphylococcus</taxon>
    </lineage>
</organism>
<comment type="function">
    <text evidence="1">Removes 5-oxoproline from various penultimate amino acid residues except L-proline.</text>
</comment>
<comment type="catalytic activity">
    <reaction evidence="1">
        <text>Release of an N-terminal pyroglutamyl group from a polypeptide, the second amino acid generally not being Pro.</text>
        <dbReference type="EC" id="3.4.19.3"/>
    </reaction>
</comment>
<comment type="subunit">
    <text evidence="1">Homotetramer.</text>
</comment>
<comment type="subcellular location">
    <subcellularLocation>
        <location evidence="1">Cytoplasm</location>
    </subcellularLocation>
</comment>
<comment type="similarity">
    <text evidence="1">Belongs to the peptidase C15 family.</text>
</comment>
<sequence length="212" mass="23200">MHILVTGFAPFDNQNINPSWEAVTQLEDIIGTHTIDKLKLPTSFKKVDNIINKTLASNHYDVVLAIGQAGGRNAITPERVAINIDDARIPDNDDFQPIDQAIHLDGAPAYFSNLPVKAMTQSIINQGLPGALSNSAGTYVCNHVLYHLGYLQDKHYPHLRFGFIHVPYIPEQVIGKPDTPSMPLEKIVAGLTAAIEAISNDEDLRIALGTTE</sequence>
<protein>
    <recommendedName>
        <fullName evidence="1">Pyrrolidone-carboxylate peptidase</fullName>
        <ecNumber evidence="1">3.4.19.3</ecNumber>
    </recommendedName>
    <alternativeName>
        <fullName evidence="1">5-oxoprolyl-peptidase</fullName>
    </alternativeName>
    <alternativeName>
        <fullName evidence="1">Pyroglutamyl-peptidase I</fullName>
        <shortName evidence="1">PGP-I</shortName>
        <shortName evidence="1">Pyrase</shortName>
    </alternativeName>
</protein>